<organism>
    <name type="scientific">Yaba monkey tumor virus (strain VR587)</name>
    <name type="common">YMTV</name>
    <dbReference type="NCBI Taxonomy" id="928314"/>
    <lineage>
        <taxon>Viruses</taxon>
        <taxon>Varidnaviria</taxon>
        <taxon>Bamfordvirae</taxon>
        <taxon>Nucleocytoviricota</taxon>
        <taxon>Pokkesviricetes</taxon>
        <taxon>Chitovirales</taxon>
        <taxon>Poxviridae</taxon>
        <taxon>Chordopoxvirinae</taxon>
        <taxon>Yatapoxvirus</taxon>
        <taxon>Yaba monkey tumor virus</taxon>
    </lineage>
</organism>
<gene>
    <name type="primary">TK</name>
    <name type="ordered locus">66R</name>
    <name type="ORF">I7R</name>
</gene>
<dbReference type="EC" id="2.7.1.21"/>
<dbReference type="EMBL" id="AY386371">
    <property type="protein sequence ID" value="AAR07422.1"/>
    <property type="molecule type" value="Genomic_DNA"/>
</dbReference>
<dbReference type="RefSeq" id="NP_938321.1">
    <property type="nucleotide sequence ID" value="NC_005179.1"/>
</dbReference>
<dbReference type="SMR" id="Q90033"/>
<dbReference type="KEGG" id="vg:2943610"/>
<dbReference type="Proteomes" id="UP000008596">
    <property type="component" value="Segment"/>
</dbReference>
<dbReference type="GO" id="GO:0005524">
    <property type="term" value="F:ATP binding"/>
    <property type="evidence" value="ECO:0007669"/>
    <property type="project" value="UniProtKB-KW"/>
</dbReference>
<dbReference type="GO" id="GO:0046872">
    <property type="term" value="F:metal ion binding"/>
    <property type="evidence" value="ECO:0007669"/>
    <property type="project" value="UniProtKB-KW"/>
</dbReference>
<dbReference type="GO" id="GO:0004797">
    <property type="term" value="F:thymidine kinase activity"/>
    <property type="evidence" value="ECO:0007669"/>
    <property type="project" value="UniProtKB-EC"/>
</dbReference>
<dbReference type="GO" id="GO:0071897">
    <property type="term" value="P:DNA biosynthetic process"/>
    <property type="evidence" value="ECO:0007669"/>
    <property type="project" value="UniProtKB-KW"/>
</dbReference>
<dbReference type="GO" id="GO:0046104">
    <property type="term" value="P:thymidine metabolic process"/>
    <property type="evidence" value="ECO:0007669"/>
    <property type="project" value="TreeGrafter"/>
</dbReference>
<dbReference type="FunFam" id="3.30.60.20:FF:000028">
    <property type="entry name" value="Thymidine kinase"/>
    <property type="match status" value="1"/>
</dbReference>
<dbReference type="FunFam" id="3.40.50.300:FF:001270">
    <property type="entry name" value="Thymidine kinase"/>
    <property type="match status" value="1"/>
</dbReference>
<dbReference type="Gene3D" id="3.30.60.20">
    <property type="match status" value="1"/>
</dbReference>
<dbReference type="Gene3D" id="3.40.50.300">
    <property type="entry name" value="P-loop containing nucleotide triphosphate hydrolases"/>
    <property type="match status" value="1"/>
</dbReference>
<dbReference type="InterPro" id="IPR027417">
    <property type="entry name" value="P-loop_NTPase"/>
</dbReference>
<dbReference type="InterPro" id="IPR001267">
    <property type="entry name" value="Thymidine_kinase"/>
</dbReference>
<dbReference type="InterPro" id="IPR020633">
    <property type="entry name" value="Thymidine_kinase_CS"/>
</dbReference>
<dbReference type="PANTHER" id="PTHR11441">
    <property type="entry name" value="THYMIDINE KINASE"/>
    <property type="match status" value="1"/>
</dbReference>
<dbReference type="PANTHER" id="PTHR11441:SF0">
    <property type="entry name" value="THYMIDINE KINASE, CYTOSOLIC"/>
    <property type="match status" value="1"/>
</dbReference>
<dbReference type="Pfam" id="PF00265">
    <property type="entry name" value="TK"/>
    <property type="match status" value="1"/>
</dbReference>
<dbReference type="PIRSF" id="PIRSF035805">
    <property type="entry name" value="TK_cell"/>
    <property type="match status" value="1"/>
</dbReference>
<dbReference type="SUPFAM" id="SSF57716">
    <property type="entry name" value="Glucocorticoid receptor-like (DNA-binding domain)"/>
    <property type="match status" value="1"/>
</dbReference>
<dbReference type="SUPFAM" id="SSF52540">
    <property type="entry name" value="P-loop containing nucleoside triphosphate hydrolases"/>
    <property type="match status" value="1"/>
</dbReference>
<dbReference type="PROSITE" id="PS00603">
    <property type="entry name" value="TK_CELLULAR_TYPE"/>
    <property type="match status" value="1"/>
</dbReference>
<organismHost>
    <name type="scientific">Erythrocebus patas</name>
    <name type="common">Red guenon</name>
    <name type="synonym">Cercopithecus patas</name>
    <dbReference type="NCBI Taxonomy" id="9538"/>
</organismHost>
<organismHost>
    <name type="scientific">Homo sapiens</name>
    <name type="common">Human</name>
    <dbReference type="NCBI Taxonomy" id="9606"/>
</organismHost>
<organismHost>
    <name type="scientific">Macaca</name>
    <name type="common">macaques</name>
    <dbReference type="NCBI Taxonomy" id="9539"/>
</organismHost>
<organismHost>
    <name type="scientific">Papio hamadryas</name>
    <name type="common">Hamadryas baboon</name>
    <dbReference type="NCBI Taxonomy" id="9557"/>
</organismHost>
<proteinExistence type="inferred from homology"/>
<protein>
    <recommendedName>
        <fullName>Thymidine kinase</fullName>
        <ecNumber>2.7.1.21</ecNumber>
    </recommendedName>
</protein>
<name>KITH_YMTV5</name>
<keyword id="KW-0067">ATP-binding</keyword>
<keyword id="KW-0237">DNA synthesis</keyword>
<keyword id="KW-0418">Kinase</keyword>
<keyword id="KW-0479">Metal-binding</keyword>
<keyword id="KW-0547">Nucleotide-binding</keyword>
<keyword id="KW-1185">Reference proteome</keyword>
<keyword id="KW-0808">Transferase</keyword>
<keyword id="KW-0862">Zinc</keyword>
<accession>Q90033</accession>
<comment type="catalytic activity">
    <reaction>
        <text>thymidine + ATP = dTMP + ADP + H(+)</text>
        <dbReference type="Rhea" id="RHEA:19129"/>
        <dbReference type="ChEBI" id="CHEBI:15378"/>
        <dbReference type="ChEBI" id="CHEBI:17748"/>
        <dbReference type="ChEBI" id="CHEBI:30616"/>
        <dbReference type="ChEBI" id="CHEBI:63528"/>
        <dbReference type="ChEBI" id="CHEBI:456216"/>
        <dbReference type="EC" id="2.7.1.21"/>
    </reaction>
</comment>
<comment type="similarity">
    <text evidence="3">Belongs to the thymidine kinase family.</text>
</comment>
<evidence type="ECO:0000250" key="1"/>
<evidence type="ECO:0000255" key="2"/>
<evidence type="ECO:0000305" key="3"/>
<sequence>MNSRSGYIHIILGPMFSGKSTELIRLLKRYQVAMYTCLVIKYSKDERYGRGLVTHDNDSVPAIPVNSLNEINCNDINADVIGIDEGQFFPDIVEFCDYMANNGKILIVAALDGTFLRQPFGNILNLIPRAEYVLKLTAVCMICFGSASFSKRISDEQEIEIIGGKEKYQSVCRVCYFKINN</sequence>
<feature type="chain" id="PRO_0000174945" description="Thymidine kinase">
    <location>
        <begin position="1"/>
        <end position="181"/>
    </location>
</feature>
<feature type="active site" description="Proton acceptor" evidence="2">
    <location>
        <position position="85"/>
    </location>
</feature>
<feature type="binding site" evidence="1">
    <location>
        <begin position="13"/>
        <end position="20"/>
    </location>
    <ligand>
        <name>ATP</name>
        <dbReference type="ChEBI" id="CHEBI:30616"/>
    </ligand>
</feature>
<feature type="binding site" evidence="1">
    <location>
        <position position="115"/>
    </location>
    <ligand>
        <name>substrate</name>
    </ligand>
</feature>
<feature type="binding site" evidence="1">
    <location>
        <position position="140"/>
    </location>
    <ligand>
        <name>Zn(2+)</name>
        <dbReference type="ChEBI" id="CHEBI:29105"/>
    </ligand>
</feature>
<feature type="binding site" evidence="1">
    <location>
        <position position="143"/>
    </location>
    <ligand>
        <name>Zn(2+)</name>
        <dbReference type="ChEBI" id="CHEBI:29105"/>
    </ligand>
</feature>
<feature type="binding site" evidence="1">
    <location>
        <begin position="159"/>
        <end position="163"/>
    </location>
    <ligand>
        <name>substrate</name>
    </ligand>
</feature>
<feature type="binding site" evidence="1">
    <location>
        <position position="172"/>
    </location>
    <ligand>
        <name>Zn(2+)</name>
        <dbReference type="ChEBI" id="CHEBI:29105"/>
    </ligand>
</feature>
<feature type="binding site" evidence="1">
    <location>
        <position position="175"/>
    </location>
    <ligand>
        <name>Zn(2+)</name>
        <dbReference type="ChEBI" id="CHEBI:29105"/>
    </ligand>
</feature>
<reference key="1">
    <citation type="journal article" date="1995" name="J. Gen. Virol.">
        <title>Identification and characterization of the thymidine kinase gene of Yaba virus.</title>
        <authorList>
            <person name="Amano H."/>
            <person name="Ueda Y."/>
            <person name="Miyamura T."/>
        </authorList>
    </citation>
    <scope>NUCLEOTIDE SEQUENCE [GENOMIC DNA]</scope>
</reference>
<reference key="2">
    <citation type="journal article" date="2003" name="J. Virol.">
        <title>Complete genomic sequence and comparative analysis of the tumorigenic poxvirus Yaba monkey tumor virus.</title>
        <authorList>
            <person name="Brunetti C.R."/>
            <person name="Amano H."/>
            <person name="Ueda Y."/>
            <person name="Qin J."/>
            <person name="Miyamura T."/>
            <person name="Suzuki T."/>
            <person name="Li X."/>
            <person name="Barrett J.W."/>
            <person name="McFadden G."/>
        </authorList>
    </citation>
    <scope>NUCLEOTIDE SEQUENCE [LARGE SCALE GENOMIC DNA]</scope>
</reference>